<organism>
    <name type="scientific">Anaplasma marginale (strain St. Maries)</name>
    <dbReference type="NCBI Taxonomy" id="234826"/>
    <lineage>
        <taxon>Bacteria</taxon>
        <taxon>Pseudomonadati</taxon>
        <taxon>Pseudomonadota</taxon>
        <taxon>Alphaproteobacteria</taxon>
        <taxon>Rickettsiales</taxon>
        <taxon>Anaplasmataceae</taxon>
        <taxon>Anaplasma</taxon>
    </lineage>
</organism>
<feature type="chain" id="PRO_0000255278" description="Glycerol-3-phosphate dehydrogenase [NAD(P)+]">
    <location>
        <begin position="1"/>
        <end position="335"/>
    </location>
</feature>
<feature type="active site" description="Proton acceptor" evidence="1">
    <location>
        <position position="190"/>
    </location>
</feature>
<feature type="binding site" evidence="1">
    <location>
        <position position="11"/>
    </location>
    <ligand>
        <name>NADPH</name>
        <dbReference type="ChEBI" id="CHEBI:57783"/>
    </ligand>
</feature>
<feature type="binding site" evidence="1">
    <location>
        <position position="31"/>
    </location>
    <ligand>
        <name>NADPH</name>
        <dbReference type="ChEBI" id="CHEBI:57783"/>
    </ligand>
</feature>
<feature type="binding site" evidence="1">
    <location>
        <position position="107"/>
    </location>
    <ligand>
        <name>NADPH</name>
        <dbReference type="ChEBI" id="CHEBI:57783"/>
    </ligand>
</feature>
<feature type="binding site" evidence="1">
    <location>
        <position position="107"/>
    </location>
    <ligand>
        <name>sn-glycerol 3-phosphate</name>
        <dbReference type="ChEBI" id="CHEBI:57597"/>
    </ligand>
</feature>
<feature type="binding site" evidence="1">
    <location>
        <position position="135"/>
    </location>
    <ligand>
        <name>sn-glycerol 3-phosphate</name>
        <dbReference type="ChEBI" id="CHEBI:57597"/>
    </ligand>
</feature>
<feature type="binding site" evidence="1">
    <location>
        <position position="139"/>
    </location>
    <ligand>
        <name>NADPH</name>
        <dbReference type="ChEBI" id="CHEBI:57783"/>
    </ligand>
</feature>
<feature type="binding site" evidence="1">
    <location>
        <position position="190"/>
    </location>
    <ligand>
        <name>sn-glycerol 3-phosphate</name>
        <dbReference type="ChEBI" id="CHEBI:57597"/>
    </ligand>
</feature>
<feature type="binding site" evidence="1">
    <location>
        <position position="245"/>
    </location>
    <ligand>
        <name>sn-glycerol 3-phosphate</name>
        <dbReference type="ChEBI" id="CHEBI:57597"/>
    </ligand>
</feature>
<feature type="binding site" evidence="1">
    <location>
        <position position="255"/>
    </location>
    <ligand>
        <name>sn-glycerol 3-phosphate</name>
        <dbReference type="ChEBI" id="CHEBI:57597"/>
    </ligand>
</feature>
<feature type="binding site" evidence="1">
    <location>
        <position position="256"/>
    </location>
    <ligand>
        <name>NADPH</name>
        <dbReference type="ChEBI" id="CHEBI:57783"/>
    </ligand>
</feature>
<feature type="binding site" evidence="1">
    <location>
        <position position="256"/>
    </location>
    <ligand>
        <name>sn-glycerol 3-phosphate</name>
        <dbReference type="ChEBI" id="CHEBI:57597"/>
    </ligand>
</feature>
<feature type="binding site" evidence="1">
    <location>
        <position position="257"/>
    </location>
    <ligand>
        <name>sn-glycerol 3-phosphate</name>
        <dbReference type="ChEBI" id="CHEBI:57597"/>
    </ligand>
</feature>
<feature type="binding site" evidence="1">
    <location>
        <position position="280"/>
    </location>
    <ligand>
        <name>NADPH</name>
        <dbReference type="ChEBI" id="CHEBI:57783"/>
    </ligand>
</feature>
<feature type="binding site" evidence="1">
    <location>
        <position position="282"/>
    </location>
    <ligand>
        <name>NADPH</name>
        <dbReference type="ChEBI" id="CHEBI:57783"/>
    </ligand>
</feature>
<protein>
    <recommendedName>
        <fullName evidence="1">Glycerol-3-phosphate dehydrogenase [NAD(P)+]</fullName>
        <ecNumber evidence="1">1.1.1.94</ecNumber>
    </recommendedName>
    <alternativeName>
        <fullName evidence="1">NAD(P)(+)-dependent glycerol-3-phosphate dehydrogenase</fullName>
    </alternativeName>
    <alternativeName>
        <fullName evidence="1">NAD(P)H-dependent dihydroxyacetone-phosphate reductase</fullName>
    </alternativeName>
</protein>
<name>GPDA_ANAMM</name>
<comment type="function">
    <text evidence="1">Catalyzes the reduction of the glycolytic intermediate dihydroxyacetone phosphate (DHAP) to sn-glycerol 3-phosphate (G3P), the key precursor for phospholipid synthesis.</text>
</comment>
<comment type="catalytic activity">
    <reaction evidence="1">
        <text>sn-glycerol 3-phosphate + NAD(+) = dihydroxyacetone phosphate + NADH + H(+)</text>
        <dbReference type="Rhea" id="RHEA:11092"/>
        <dbReference type="ChEBI" id="CHEBI:15378"/>
        <dbReference type="ChEBI" id="CHEBI:57540"/>
        <dbReference type="ChEBI" id="CHEBI:57597"/>
        <dbReference type="ChEBI" id="CHEBI:57642"/>
        <dbReference type="ChEBI" id="CHEBI:57945"/>
        <dbReference type="EC" id="1.1.1.94"/>
    </reaction>
    <physiologicalReaction direction="right-to-left" evidence="1">
        <dbReference type="Rhea" id="RHEA:11094"/>
    </physiologicalReaction>
</comment>
<comment type="catalytic activity">
    <reaction evidence="1">
        <text>sn-glycerol 3-phosphate + NADP(+) = dihydroxyacetone phosphate + NADPH + H(+)</text>
        <dbReference type="Rhea" id="RHEA:11096"/>
        <dbReference type="ChEBI" id="CHEBI:15378"/>
        <dbReference type="ChEBI" id="CHEBI:57597"/>
        <dbReference type="ChEBI" id="CHEBI:57642"/>
        <dbReference type="ChEBI" id="CHEBI:57783"/>
        <dbReference type="ChEBI" id="CHEBI:58349"/>
        <dbReference type="EC" id="1.1.1.94"/>
    </reaction>
    <physiologicalReaction direction="right-to-left" evidence="1">
        <dbReference type="Rhea" id="RHEA:11098"/>
    </physiologicalReaction>
</comment>
<comment type="pathway">
    <text evidence="1">Membrane lipid metabolism; glycerophospholipid metabolism.</text>
</comment>
<comment type="subcellular location">
    <subcellularLocation>
        <location evidence="1">Cytoplasm</location>
    </subcellularLocation>
</comment>
<comment type="similarity">
    <text evidence="1">Belongs to the NAD-dependent glycerol-3-phosphate dehydrogenase family.</text>
</comment>
<comment type="sequence caution" evidence="2">
    <conflict type="erroneous initiation">
        <sequence resource="EMBL-CDS" id="AAV86878"/>
    </conflict>
</comment>
<evidence type="ECO:0000255" key="1">
    <source>
        <dbReference type="HAMAP-Rule" id="MF_00394"/>
    </source>
</evidence>
<evidence type="ECO:0000305" key="2"/>
<sequence>MQVTILGAGAFGTALSIALCNTGKKVRIWSRNGQVVESLRTHGENSVYLPGFKVPREVLVHSDMGLATDGPAAILMCVPAQELRSLCNTITAASALEAGVPLLVCSKGIENSSLKFPSEVVAEMFPQNPVFVLSGPALARELASGLPCAMVLAGDEITTAETLASQLSGPALAIVHSGDLMGVQVGAVMKNIIAIASGIIAGMGLGHNASAIVMVQGMSEIKAVCEAKVGVAATETLIGLSCLGDLVLTCTAPGSRNMSFGSSVGKAGRAGASGQQKPMLVEGVESVTAMVNMGKALNLELPICSAIARMLHGQLGVRQAAAEILSAPVKSRLNV</sequence>
<accession>Q5PA02</accession>
<dbReference type="EC" id="1.1.1.94" evidence="1"/>
<dbReference type="EMBL" id="CP000030">
    <property type="protein sequence ID" value="AAV86878.1"/>
    <property type="status" value="ALT_INIT"/>
    <property type="molecule type" value="Genomic_DNA"/>
</dbReference>
<dbReference type="SMR" id="Q5PA02"/>
<dbReference type="KEGG" id="ama:AM985"/>
<dbReference type="HOGENOM" id="CLU_033449_0_0_5"/>
<dbReference type="UniPathway" id="UPA00940"/>
<dbReference type="GO" id="GO:0005829">
    <property type="term" value="C:cytosol"/>
    <property type="evidence" value="ECO:0007669"/>
    <property type="project" value="TreeGrafter"/>
</dbReference>
<dbReference type="GO" id="GO:0047952">
    <property type="term" value="F:glycerol-3-phosphate dehydrogenase [NAD(P)+] activity"/>
    <property type="evidence" value="ECO:0007669"/>
    <property type="project" value="UniProtKB-UniRule"/>
</dbReference>
<dbReference type="GO" id="GO:0051287">
    <property type="term" value="F:NAD binding"/>
    <property type="evidence" value="ECO:0007669"/>
    <property type="project" value="InterPro"/>
</dbReference>
<dbReference type="GO" id="GO:0005975">
    <property type="term" value="P:carbohydrate metabolic process"/>
    <property type="evidence" value="ECO:0007669"/>
    <property type="project" value="InterPro"/>
</dbReference>
<dbReference type="GO" id="GO:0046167">
    <property type="term" value="P:glycerol-3-phosphate biosynthetic process"/>
    <property type="evidence" value="ECO:0007669"/>
    <property type="project" value="UniProtKB-UniRule"/>
</dbReference>
<dbReference type="GO" id="GO:0046168">
    <property type="term" value="P:glycerol-3-phosphate catabolic process"/>
    <property type="evidence" value="ECO:0007669"/>
    <property type="project" value="InterPro"/>
</dbReference>
<dbReference type="GO" id="GO:0006650">
    <property type="term" value="P:glycerophospholipid metabolic process"/>
    <property type="evidence" value="ECO:0007669"/>
    <property type="project" value="UniProtKB-UniRule"/>
</dbReference>
<dbReference type="GO" id="GO:0008654">
    <property type="term" value="P:phospholipid biosynthetic process"/>
    <property type="evidence" value="ECO:0007669"/>
    <property type="project" value="UniProtKB-KW"/>
</dbReference>
<dbReference type="FunFam" id="3.40.50.720:FF:000019">
    <property type="entry name" value="Glycerol-3-phosphate dehydrogenase [NAD(P)+]"/>
    <property type="match status" value="1"/>
</dbReference>
<dbReference type="Gene3D" id="1.10.1040.10">
    <property type="entry name" value="N-(1-d-carboxylethyl)-l-norvaline Dehydrogenase, domain 2"/>
    <property type="match status" value="1"/>
</dbReference>
<dbReference type="Gene3D" id="3.40.50.720">
    <property type="entry name" value="NAD(P)-binding Rossmann-like Domain"/>
    <property type="match status" value="1"/>
</dbReference>
<dbReference type="HAMAP" id="MF_00394">
    <property type="entry name" value="NAD_Glyc3P_dehydrog"/>
    <property type="match status" value="1"/>
</dbReference>
<dbReference type="InterPro" id="IPR008927">
    <property type="entry name" value="6-PGluconate_DH-like_C_sf"/>
</dbReference>
<dbReference type="InterPro" id="IPR013328">
    <property type="entry name" value="6PGD_dom2"/>
</dbReference>
<dbReference type="InterPro" id="IPR006168">
    <property type="entry name" value="G3P_DH_NAD-dep"/>
</dbReference>
<dbReference type="InterPro" id="IPR006109">
    <property type="entry name" value="G3P_DH_NAD-dep_C"/>
</dbReference>
<dbReference type="InterPro" id="IPR011128">
    <property type="entry name" value="G3P_DH_NAD-dep_N"/>
</dbReference>
<dbReference type="InterPro" id="IPR036291">
    <property type="entry name" value="NAD(P)-bd_dom_sf"/>
</dbReference>
<dbReference type="NCBIfam" id="NF000940">
    <property type="entry name" value="PRK00094.1-2"/>
    <property type="match status" value="1"/>
</dbReference>
<dbReference type="NCBIfam" id="NF000942">
    <property type="entry name" value="PRK00094.1-4"/>
    <property type="match status" value="1"/>
</dbReference>
<dbReference type="PANTHER" id="PTHR11728">
    <property type="entry name" value="GLYCEROL-3-PHOSPHATE DEHYDROGENASE"/>
    <property type="match status" value="1"/>
</dbReference>
<dbReference type="PANTHER" id="PTHR11728:SF1">
    <property type="entry name" value="GLYCEROL-3-PHOSPHATE DEHYDROGENASE [NAD(+)] 2, CHLOROPLASTIC"/>
    <property type="match status" value="1"/>
</dbReference>
<dbReference type="Pfam" id="PF07479">
    <property type="entry name" value="NAD_Gly3P_dh_C"/>
    <property type="match status" value="1"/>
</dbReference>
<dbReference type="Pfam" id="PF01210">
    <property type="entry name" value="NAD_Gly3P_dh_N"/>
    <property type="match status" value="1"/>
</dbReference>
<dbReference type="PIRSF" id="PIRSF000114">
    <property type="entry name" value="Glycerol-3-P_dh"/>
    <property type="match status" value="1"/>
</dbReference>
<dbReference type="PRINTS" id="PR00077">
    <property type="entry name" value="GPDHDRGNASE"/>
</dbReference>
<dbReference type="SUPFAM" id="SSF48179">
    <property type="entry name" value="6-phosphogluconate dehydrogenase C-terminal domain-like"/>
    <property type="match status" value="1"/>
</dbReference>
<dbReference type="SUPFAM" id="SSF51735">
    <property type="entry name" value="NAD(P)-binding Rossmann-fold domains"/>
    <property type="match status" value="1"/>
</dbReference>
<dbReference type="PROSITE" id="PS00957">
    <property type="entry name" value="NAD_G3PDH"/>
    <property type="match status" value="1"/>
</dbReference>
<reference key="1">
    <citation type="journal article" date="2005" name="Proc. Natl. Acad. Sci. U.S.A.">
        <title>Complete genome sequencing of Anaplasma marginale reveals that the surface is skewed to two superfamilies of outer membrane proteins.</title>
        <authorList>
            <person name="Brayton K.A."/>
            <person name="Kappmeyer L.S."/>
            <person name="Herndon D.R."/>
            <person name="Dark M.J."/>
            <person name="Tibbals D.L."/>
            <person name="Palmer G.H."/>
            <person name="McGuire T.C."/>
            <person name="Knowles D.P. Jr."/>
        </authorList>
    </citation>
    <scope>NUCLEOTIDE SEQUENCE [LARGE SCALE GENOMIC DNA]</scope>
    <source>
        <strain>St. Maries</strain>
    </source>
</reference>
<proteinExistence type="inferred from homology"/>
<keyword id="KW-0963">Cytoplasm</keyword>
<keyword id="KW-0444">Lipid biosynthesis</keyword>
<keyword id="KW-0443">Lipid metabolism</keyword>
<keyword id="KW-0520">NAD</keyword>
<keyword id="KW-0521">NADP</keyword>
<keyword id="KW-0547">Nucleotide-binding</keyword>
<keyword id="KW-0560">Oxidoreductase</keyword>
<keyword id="KW-0594">Phospholipid biosynthesis</keyword>
<keyword id="KW-1208">Phospholipid metabolism</keyword>
<gene>
    <name evidence="1" type="primary">gpsA</name>
    <name type="ordered locus">AM985</name>
</gene>